<protein>
    <recommendedName>
        <fullName evidence="6">Basic phospholipase A2</fullName>
        <shortName evidence="6">svPLA2</shortName>
        <ecNumber evidence="5">3.1.1.4</ecNumber>
    </recommendedName>
</protein>
<name>PA2B1_AGKPL</name>
<proteinExistence type="evidence at protein level"/>
<accession>C0HM79</accession>
<sequence>NLFQFEKLIKKSGMLWYSAYGCYCGWGGQGRPKDATDRCCFVHDCCYGKVTGCNPKCGGTNPCKKQICECDRAAAICFRDNLKTYDSKTYWKYPK</sequence>
<dbReference type="EC" id="3.1.1.4" evidence="5"/>
<dbReference type="SMR" id="C0HM79"/>
<dbReference type="GO" id="GO:0005576">
    <property type="term" value="C:extracellular region"/>
    <property type="evidence" value="ECO:0007669"/>
    <property type="project" value="UniProtKB-SubCell"/>
</dbReference>
<dbReference type="GO" id="GO:0005509">
    <property type="term" value="F:calcium ion binding"/>
    <property type="evidence" value="ECO:0007669"/>
    <property type="project" value="InterPro"/>
</dbReference>
<dbReference type="GO" id="GO:0047498">
    <property type="term" value="F:calcium-dependent phospholipase A2 activity"/>
    <property type="evidence" value="ECO:0007669"/>
    <property type="project" value="TreeGrafter"/>
</dbReference>
<dbReference type="GO" id="GO:0005543">
    <property type="term" value="F:phospholipid binding"/>
    <property type="evidence" value="ECO:0007669"/>
    <property type="project" value="TreeGrafter"/>
</dbReference>
<dbReference type="GO" id="GO:0090729">
    <property type="term" value="F:toxin activity"/>
    <property type="evidence" value="ECO:0007669"/>
    <property type="project" value="UniProtKB-KW"/>
</dbReference>
<dbReference type="GO" id="GO:0050482">
    <property type="term" value="P:arachidonate secretion"/>
    <property type="evidence" value="ECO:0007669"/>
    <property type="project" value="InterPro"/>
</dbReference>
<dbReference type="GO" id="GO:0016042">
    <property type="term" value="P:lipid catabolic process"/>
    <property type="evidence" value="ECO:0007669"/>
    <property type="project" value="UniProtKB-KW"/>
</dbReference>
<dbReference type="GO" id="GO:0042130">
    <property type="term" value="P:negative regulation of T cell proliferation"/>
    <property type="evidence" value="ECO:0007669"/>
    <property type="project" value="TreeGrafter"/>
</dbReference>
<dbReference type="GO" id="GO:0006644">
    <property type="term" value="P:phospholipid metabolic process"/>
    <property type="evidence" value="ECO:0007669"/>
    <property type="project" value="InterPro"/>
</dbReference>
<dbReference type="CDD" id="cd00125">
    <property type="entry name" value="PLA2c"/>
    <property type="match status" value="1"/>
</dbReference>
<dbReference type="Gene3D" id="1.20.90.10">
    <property type="entry name" value="Phospholipase A2 domain"/>
    <property type="match status" value="2"/>
</dbReference>
<dbReference type="InterPro" id="IPR001211">
    <property type="entry name" value="PLipase_A2"/>
</dbReference>
<dbReference type="InterPro" id="IPR033112">
    <property type="entry name" value="PLipase_A2_Asp_AS"/>
</dbReference>
<dbReference type="InterPro" id="IPR016090">
    <property type="entry name" value="PLipase_A2_dom"/>
</dbReference>
<dbReference type="InterPro" id="IPR036444">
    <property type="entry name" value="PLipase_A2_dom_sf"/>
</dbReference>
<dbReference type="InterPro" id="IPR033113">
    <property type="entry name" value="PLipase_A2_His_AS"/>
</dbReference>
<dbReference type="PANTHER" id="PTHR11716">
    <property type="entry name" value="PHOSPHOLIPASE A2 FAMILY MEMBER"/>
    <property type="match status" value="1"/>
</dbReference>
<dbReference type="PANTHER" id="PTHR11716:SF9">
    <property type="entry name" value="PHOSPHOLIPASE A2, MEMBRANE ASSOCIATED"/>
    <property type="match status" value="1"/>
</dbReference>
<dbReference type="Pfam" id="PF00068">
    <property type="entry name" value="Phospholip_A2_1"/>
    <property type="match status" value="1"/>
</dbReference>
<dbReference type="PRINTS" id="PR00389">
    <property type="entry name" value="PHPHLIPASEA2"/>
</dbReference>
<dbReference type="SMART" id="SM00085">
    <property type="entry name" value="PA2c"/>
    <property type="match status" value="1"/>
</dbReference>
<dbReference type="SUPFAM" id="SSF48619">
    <property type="entry name" value="Phospholipase A2, PLA2"/>
    <property type="match status" value="1"/>
</dbReference>
<organism>
    <name type="scientific">Agkistrodon piscivorus leucostoma</name>
    <name type="common">Western cottonmouth</name>
    <name type="synonym">Acontias leucostoma</name>
    <dbReference type="NCBI Taxonomy" id="459671"/>
    <lineage>
        <taxon>Eukaryota</taxon>
        <taxon>Metazoa</taxon>
        <taxon>Chordata</taxon>
        <taxon>Craniata</taxon>
        <taxon>Vertebrata</taxon>
        <taxon>Euteleostomi</taxon>
        <taxon>Lepidosauria</taxon>
        <taxon>Squamata</taxon>
        <taxon>Bifurcata</taxon>
        <taxon>Unidentata</taxon>
        <taxon>Episquamata</taxon>
        <taxon>Toxicofera</taxon>
        <taxon>Serpentes</taxon>
        <taxon>Colubroidea</taxon>
        <taxon>Viperidae</taxon>
        <taxon>Crotalinae</taxon>
        <taxon>Agkistrodon</taxon>
    </lineage>
</organism>
<keyword id="KW-0106">Calcium</keyword>
<keyword id="KW-0903">Direct protein sequencing</keyword>
<keyword id="KW-1015">Disulfide bond</keyword>
<keyword id="KW-0378">Hydrolase</keyword>
<keyword id="KW-0442">Lipid degradation</keyword>
<keyword id="KW-0443">Lipid metabolism</keyword>
<keyword id="KW-0449">Lipoprotein</keyword>
<keyword id="KW-0479">Metal-binding</keyword>
<keyword id="KW-0564">Palmitate</keyword>
<keyword id="KW-0964">Secreted</keyword>
<keyword id="KW-0800">Toxin</keyword>
<reference key="1">
    <citation type="journal article" date="2021" name="Int. J. Biol. Macromol.">
        <title>Structural, enzymatic and pharmacological profiles of AplTX-II-A basic sPLA2 (D49) isolated from the Agkistrodon piscivorus leucostoma snake venom.</title>
        <authorList>
            <person name="Resende L.M."/>
            <person name="Almeida J.R."/>
            <person name="Guaraca-Medina T.A."/>
            <person name="Viegas M.F."/>
            <person name="Soares A.M."/>
            <person name="Ramos M.J."/>
            <person name="Fernandes P.A."/>
            <person name="Marangoni S."/>
            <person name="Da Silva S.L."/>
        </authorList>
    </citation>
    <scope>PROTEIN SEQUENCE OF 1-30 AND 34-95</scope>
    <scope>FUNCTION</scope>
    <scope>CATALYTIC ACTIVITY</scope>
    <scope>SUBUNIT</scope>
    <scope>SUBCELLULAR LOCATION</scope>
    <scope>TISSUE SPECIFICITY</scope>
    <scope>MASS SPECTROMETRY</scope>
</reference>
<comment type="function">
    <text evidence="5">PLA2 catalyzes the calcium-dependent hydrolysis of the 2-acyl groups in 3-sn-phosphoglycerides (Ref.1). Induces local and systemic myotoxicity in an intramuscular mouse model (Ref.1). Induces local edema in a mouse footpad assay (Ref.1). Does not exhibit any anticoagulant effects (Ref.1). Does not mediate an antibacterial effect against Gram-negative and Gram-positive bacteria (Ref.1).</text>
</comment>
<comment type="catalytic activity">
    <reaction evidence="5">
        <text>a 1,2-diacyl-sn-glycero-3-phosphocholine + H2O = a 1-acyl-sn-glycero-3-phosphocholine + a fatty acid + H(+)</text>
        <dbReference type="Rhea" id="RHEA:15801"/>
        <dbReference type="ChEBI" id="CHEBI:15377"/>
        <dbReference type="ChEBI" id="CHEBI:15378"/>
        <dbReference type="ChEBI" id="CHEBI:28868"/>
        <dbReference type="ChEBI" id="CHEBI:57643"/>
        <dbReference type="ChEBI" id="CHEBI:58168"/>
        <dbReference type="EC" id="3.1.1.4"/>
    </reaction>
</comment>
<comment type="cofactor">
    <cofactor evidence="1">
        <name>Ca(2+)</name>
        <dbReference type="ChEBI" id="CHEBI:29108"/>
    </cofactor>
    <text evidence="1">Binds 1 Ca(2+) ion per subunit.</text>
</comment>
<comment type="subunit">
    <text evidence="5">Monomer.</text>
</comment>
<comment type="subcellular location">
    <subcellularLocation>
        <location evidence="5">Secreted</location>
    </subcellularLocation>
</comment>
<comment type="tissue specificity">
    <text evidence="7">Expressed by the venom gland.</text>
</comment>
<comment type="mass spectrometry"/>
<comment type="similarity">
    <text evidence="6">Belongs to the phospholipase A2 family. Group II subfamily. D49 sub-subfamily.</text>
</comment>
<evidence type="ECO:0000250" key="1">
    <source>
        <dbReference type="UniProtKB" id="P14418"/>
    </source>
</evidence>
<evidence type="ECO:0000250" key="2">
    <source>
        <dbReference type="UniProtKB" id="P51972"/>
    </source>
</evidence>
<evidence type="ECO:0000255" key="3">
    <source>
        <dbReference type="PROSITE-ProRule" id="PRU10035"/>
    </source>
</evidence>
<evidence type="ECO:0000255" key="4">
    <source>
        <dbReference type="PROSITE-ProRule" id="PRU10036"/>
    </source>
</evidence>
<evidence type="ECO:0000269" key="5">
    <source ref="1"/>
</evidence>
<evidence type="ECO:0000305" key="6"/>
<evidence type="ECO:0000305" key="7">
    <source ref="1"/>
</evidence>
<feature type="chain" id="PRO_0000458419" description="Basic phospholipase A2">
    <location>
        <begin position="1"/>
        <end position="95"/>
    </location>
</feature>
<feature type="active site" evidence="3">
    <location>
        <position position="43"/>
    </location>
</feature>
<feature type="active site" evidence="4">
    <location>
        <position position="71"/>
    </location>
</feature>
<feature type="binding site" evidence="1">
    <location>
        <position position="23"/>
    </location>
    <ligand>
        <name>Ca(2+)</name>
        <dbReference type="ChEBI" id="CHEBI:29108"/>
    </ligand>
</feature>
<feature type="binding site" evidence="1">
    <location>
        <position position="25"/>
    </location>
    <ligand>
        <name>Ca(2+)</name>
        <dbReference type="ChEBI" id="CHEBI:29108"/>
    </ligand>
</feature>
<feature type="binding site" evidence="1">
    <location>
        <position position="27"/>
    </location>
    <ligand>
        <name>Ca(2+)</name>
        <dbReference type="ChEBI" id="CHEBI:29108"/>
    </ligand>
</feature>
<feature type="binding site" evidence="1">
    <location>
        <position position="44"/>
    </location>
    <ligand>
        <name>Ca(2+)</name>
        <dbReference type="ChEBI" id="CHEBI:29108"/>
    </ligand>
</feature>
<feature type="lipid moiety-binding region" description="N6-palmitoyl lysine" evidence="2">
    <location>
        <position position="7"/>
    </location>
</feature>
<feature type="lipid moiety-binding region" description="N6-palmitoyl lysine" evidence="2">
    <location>
        <position position="10"/>
    </location>
</feature>
<feature type="disulfide bond" evidence="2">
    <location>
        <begin position="24"/>
        <end position="40"/>
    </location>
</feature>
<feature type="disulfide bond" evidence="2">
    <location>
        <begin position="39"/>
        <end position="77"/>
    </location>
</feature>
<feature type="disulfide bond" evidence="2">
    <location>
        <begin position="46"/>
        <end position="70"/>
    </location>
</feature>
<feature type="disulfide bond" evidence="2">
    <location>
        <begin position="53"/>
        <end position="63"/>
    </location>
</feature>
<feature type="disulfide bond" evidence="2">
    <location>
        <begin position="57"/>
        <end position="68"/>
    </location>
</feature>
<feature type="non-consecutive residues" evidence="5">
    <location>
        <begin position="11"/>
        <end position="12"/>
    </location>
</feature>
<feature type="non-consecutive residues" evidence="5">
    <location>
        <begin position="56"/>
        <end position="57"/>
    </location>
</feature>
<feature type="non-terminal residue" evidence="5">
    <location>
        <position position="1"/>
    </location>
</feature>
<feature type="non-terminal residue" evidence="5">
    <location>
        <position position="95"/>
    </location>
</feature>